<reference key="1">
    <citation type="journal article" date="2002" name="Genome Biol.">
        <title>Prediction of unidentified human genes on the basis of sequence similarity to novel cDNAs from cynomolgus monkey brain.</title>
        <authorList>
            <person name="Osada N."/>
            <person name="Hida M."/>
            <person name="Kusuda J."/>
            <person name="Tanuma R."/>
            <person name="Hirata M."/>
            <person name="Hirai M."/>
            <person name="Terao K."/>
            <person name="Suzuki Y."/>
            <person name="Sugano S."/>
            <person name="Hashimoto K."/>
        </authorList>
    </citation>
    <scope>NUCLEOTIDE SEQUENCE [LARGE SCALE MRNA]</scope>
    <source>
        <tissue>Frontal cortex</tissue>
    </source>
</reference>
<dbReference type="EMBL" id="AB056392">
    <property type="protein sequence ID" value="BAB33048.1"/>
    <property type="molecule type" value="mRNA"/>
</dbReference>
<dbReference type="RefSeq" id="NP_001271913.1">
    <property type="nucleotide sequence ID" value="NM_001284984.1"/>
</dbReference>
<dbReference type="RefSeq" id="XP_045227926.1">
    <property type="nucleotide sequence ID" value="XM_045371991.2"/>
</dbReference>
<dbReference type="SMR" id="Q9BGT1"/>
<dbReference type="STRING" id="9541.ENSMFAP00000031891"/>
<dbReference type="Ensembl" id="ENSMFAT00000006111.2">
    <property type="protein sequence ID" value="ENSMFAP00000031891.1"/>
    <property type="gene ID" value="ENSMFAG00000036997.2"/>
</dbReference>
<dbReference type="GeneID" id="102132425"/>
<dbReference type="VEuPathDB" id="HostDB:ENSMFAG00000036997"/>
<dbReference type="eggNOG" id="ENOG502RXZG">
    <property type="taxonomic scope" value="Eukaryota"/>
</dbReference>
<dbReference type="GeneTree" id="ENSGT00940000161805"/>
<dbReference type="OMA" id="KIYANMS"/>
<dbReference type="Proteomes" id="UP000233100">
    <property type="component" value="Chromosome 14"/>
</dbReference>
<dbReference type="Bgee" id="ENSMFAG00000036997">
    <property type="expression patterns" value="Expressed in lymph node and 13 other cell types or tissues"/>
</dbReference>
<dbReference type="Gene3D" id="1.25.40.10">
    <property type="entry name" value="Tetratricopeptide repeat domain"/>
    <property type="match status" value="1"/>
</dbReference>
<dbReference type="InterPro" id="IPR039663">
    <property type="entry name" value="AIP/AIPL1/TTC9"/>
</dbReference>
<dbReference type="InterPro" id="IPR011990">
    <property type="entry name" value="TPR-like_helical_dom_sf"/>
</dbReference>
<dbReference type="InterPro" id="IPR019734">
    <property type="entry name" value="TPR_rpt"/>
</dbReference>
<dbReference type="PANTHER" id="PTHR11242">
    <property type="entry name" value="ARYL HYDROCARBON RECEPTOR INTERACTING PROTEIN RELATED"/>
    <property type="match status" value="1"/>
</dbReference>
<dbReference type="PANTHER" id="PTHR11242:SF14">
    <property type="entry name" value="TETRATRICOPEPTIDE REPEAT PROTEIN 9C"/>
    <property type="match status" value="1"/>
</dbReference>
<dbReference type="Pfam" id="PF14559">
    <property type="entry name" value="TPR_19"/>
    <property type="match status" value="1"/>
</dbReference>
<dbReference type="SMART" id="SM00028">
    <property type="entry name" value="TPR"/>
    <property type="match status" value="3"/>
</dbReference>
<dbReference type="SUPFAM" id="SSF48452">
    <property type="entry name" value="TPR-like"/>
    <property type="match status" value="1"/>
</dbReference>
<dbReference type="PROSITE" id="PS50005">
    <property type="entry name" value="TPR"/>
    <property type="match status" value="2"/>
</dbReference>
<dbReference type="PROSITE" id="PS50293">
    <property type="entry name" value="TPR_REGION"/>
    <property type="match status" value="2"/>
</dbReference>
<accession>Q9BGT1</accession>
<feature type="chain" id="PRO_0000294466" description="Tetratricopeptide repeat protein 9C">
    <location>
        <begin position="1"/>
        <end position="171"/>
    </location>
</feature>
<feature type="repeat" description="TPR 1">
    <location>
        <begin position="8"/>
        <end position="41"/>
    </location>
</feature>
<feature type="repeat" description="TPR 2">
    <location>
        <begin position="72"/>
        <end position="107"/>
    </location>
</feature>
<feature type="repeat" description="TPR 3">
    <location>
        <begin position="108"/>
        <end position="141"/>
    </location>
</feature>
<keyword id="KW-1185">Reference proteome</keyword>
<keyword id="KW-0677">Repeat</keyword>
<keyword id="KW-0802">TPR repeat</keyword>
<proteinExistence type="evidence at transcript level"/>
<organism>
    <name type="scientific">Macaca fascicularis</name>
    <name type="common">Crab-eating macaque</name>
    <name type="synonym">Cynomolgus monkey</name>
    <dbReference type="NCBI Taxonomy" id="9541"/>
    <lineage>
        <taxon>Eukaryota</taxon>
        <taxon>Metazoa</taxon>
        <taxon>Chordata</taxon>
        <taxon>Craniata</taxon>
        <taxon>Vertebrata</taxon>
        <taxon>Euteleostomi</taxon>
        <taxon>Mammalia</taxon>
        <taxon>Eutheria</taxon>
        <taxon>Euarchontoglires</taxon>
        <taxon>Primates</taxon>
        <taxon>Haplorrhini</taxon>
        <taxon>Catarrhini</taxon>
        <taxon>Cercopithecidae</taxon>
        <taxon>Cercopithecinae</taxon>
        <taxon>Macaca</taxon>
    </lineage>
</organism>
<protein>
    <recommendedName>
        <fullName>Tetratricopeptide repeat protein 9C</fullName>
        <shortName>TPR repeat protein 9C</shortName>
    </recommendedName>
</protein>
<evidence type="ECO:0000305" key="1"/>
<sequence>MEKRLQEAQLYKEEGNQRYREGKYRDAVSRYHRALLQLRGLDPSLPSPLPNLGPQGPALTPEQENILHTTQTDCYNNLAACLLQMEPVNYERVREYSQKVLERQPDNAKALYRAGVAFFHLQDYDQARHYLLAAVNRQPKDANVRRYLQLTQSELSSYHRKEKQLYLGMFG</sequence>
<gene>
    <name type="primary">TTC9C</name>
    <name type="ORF">QflA-13179</name>
</gene>
<name>TTC9C_MACFA</name>
<comment type="similarity">
    <text evidence="1">Belongs to the TTC9 family.</text>
</comment>